<accession>A6WK51</accession>
<feature type="chain" id="PRO_0000386237" description="GTPase Obg">
    <location>
        <begin position="1"/>
        <end position="389"/>
    </location>
</feature>
<feature type="domain" description="Obg" evidence="2">
    <location>
        <begin position="1"/>
        <end position="159"/>
    </location>
</feature>
<feature type="domain" description="OBG-type G" evidence="1">
    <location>
        <begin position="160"/>
        <end position="333"/>
    </location>
</feature>
<feature type="binding site" evidence="1">
    <location>
        <begin position="166"/>
        <end position="173"/>
    </location>
    <ligand>
        <name>GTP</name>
        <dbReference type="ChEBI" id="CHEBI:37565"/>
    </ligand>
</feature>
<feature type="binding site" evidence="1">
    <location>
        <position position="173"/>
    </location>
    <ligand>
        <name>Mg(2+)</name>
        <dbReference type="ChEBI" id="CHEBI:18420"/>
    </ligand>
</feature>
<feature type="binding site" evidence="1">
    <location>
        <begin position="191"/>
        <end position="195"/>
    </location>
    <ligand>
        <name>GTP</name>
        <dbReference type="ChEBI" id="CHEBI:37565"/>
    </ligand>
</feature>
<feature type="binding site" evidence="1">
    <location>
        <position position="193"/>
    </location>
    <ligand>
        <name>Mg(2+)</name>
        <dbReference type="ChEBI" id="CHEBI:18420"/>
    </ligand>
</feature>
<feature type="binding site" evidence="1">
    <location>
        <begin position="213"/>
        <end position="216"/>
    </location>
    <ligand>
        <name>GTP</name>
        <dbReference type="ChEBI" id="CHEBI:37565"/>
    </ligand>
</feature>
<feature type="binding site" evidence="1">
    <location>
        <begin position="283"/>
        <end position="286"/>
    </location>
    <ligand>
        <name>GTP</name>
        <dbReference type="ChEBI" id="CHEBI:37565"/>
    </ligand>
</feature>
<feature type="binding site" evidence="1">
    <location>
        <begin position="314"/>
        <end position="316"/>
    </location>
    <ligand>
        <name>GTP</name>
        <dbReference type="ChEBI" id="CHEBI:37565"/>
    </ligand>
</feature>
<name>OBG_SHEB8</name>
<gene>
    <name evidence="1" type="primary">obg</name>
    <name type="ordered locus">Shew185_1038</name>
</gene>
<reference key="1">
    <citation type="submission" date="2007-07" db="EMBL/GenBank/DDBJ databases">
        <title>Complete sequence of chromosome of Shewanella baltica OS185.</title>
        <authorList>
            <consortium name="US DOE Joint Genome Institute"/>
            <person name="Copeland A."/>
            <person name="Lucas S."/>
            <person name="Lapidus A."/>
            <person name="Barry K."/>
            <person name="Glavina del Rio T."/>
            <person name="Dalin E."/>
            <person name="Tice H."/>
            <person name="Pitluck S."/>
            <person name="Sims D."/>
            <person name="Brettin T."/>
            <person name="Bruce D."/>
            <person name="Detter J.C."/>
            <person name="Han C."/>
            <person name="Schmutz J."/>
            <person name="Larimer F."/>
            <person name="Land M."/>
            <person name="Hauser L."/>
            <person name="Kyrpides N."/>
            <person name="Mikhailova N."/>
            <person name="Brettar I."/>
            <person name="Rodrigues J."/>
            <person name="Konstantinidis K."/>
            <person name="Tiedje J."/>
            <person name="Richardson P."/>
        </authorList>
    </citation>
    <scope>NUCLEOTIDE SEQUENCE [LARGE SCALE GENOMIC DNA]</scope>
    <source>
        <strain>OS185</strain>
    </source>
</reference>
<organism>
    <name type="scientific">Shewanella baltica (strain OS185)</name>
    <dbReference type="NCBI Taxonomy" id="402882"/>
    <lineage>
        <taxon>Bacteria</taxon>
        <taxon>Pseudomonadati</taxon>
        <taxon>Pseudomonadota</taxon>
        <taxon>Gammaproteobacteria</taxon>
        <taxon>Alteromonadales</taxon>
        <taxon>Shewanellaceae</taxon>
        <taxon>Shewanella</taxon>
    </lineage>
</organism>
<dbReference type="EC" id="3.6.5.-" evidence="1"/>
<dbReference type="EMBL" id="CP000753">
    <property type="protein sequence ID" value="ABS07190.1"/>
    <property type="molecule type" value="Genomic_DNA"/>
</dbReference>
<dbReference type="SMR" id="A6WK51"/>
<dbReference type="KEGG" id="sbm:Shew185_1038"/>
<dbReference type="HOGENOM" id="CLU_011747_2_0_6"/>
<dbReference type="GO" id="GO:0005737">
    <property type="term" value="C:cytoplasm"/>
    <property type="evidence" value="ECO:0007669"/>
    <property type="project" value="UniProtKB-SubCell"/>
</dbReference>
<dbReference type="GO" id="GO:0005525">
    <property type="term" value="F:GTP binding"/>
    <property type="evidence" value="ECO:0007669"/>
    <property type="project" value="UniProtKB-UniRule"/>
</dbReference>
<dbReference type="GO" id="GO:0003924">
    <property type="term" value="F:GTPase activity"/>
    <property type="evidence" value="ECO:0007669"/>
    <property type="project" value="UniProtKB-UniRule"/>
</dbReference>
<dbReference type="GO" id="GO:0000287">
    <property type="term" value="F:magnesium ion binding"/>
    <property type="evidence" value="ECO:0007669"/>
    <property type="project" value="InterPro"/>
</dbReference>
<dbReference type="GO" id="GO:0042254">
    <property type="term" value="P:ribosome biogenesis"/>
    <property type="evidence" value="ECO:0007669"/>
    <property type="project" value="UniProtKB-UniRule"/>
</dbReference>
<dbReference type="CDD" id="cd01898">
    <property type="entry name" value="Obg"/>
    <property type="match status" value="1"/>
</dbReference>
<dbReference type="FunFam" id="2.70.210.12:FF:000001">
    <property type="entry name" value="GTPase Obg"/>
    <property type="match status" value="1"/>
</dbReference>
<dbReference type="Gene3D" id="2.70.210.12">
    <property type="entry name" value="GTP1/OBG domain"/>
    <property type="match status" value="1"/>
</dbReference>
<dbReference type="Gene3D" id="3.40.50.300">
    <property type="entry name" value="P-loop containing nucleotide triphosphate hydrolases"/>
    <property type="match status" value="1"/>
</dbReference>
<dbReference type="HAMAP" id="MF_01454">
    <property type="entry name" value="GTPase_Obg"/>
    <property type="match status" value="1"/>
</dbReference>
<dbReference type="InterPro" id="IPR031167">
    <property type="entry name" value="G_OBG"/>
</dbReference>
<dbReference type="InterPro" id="IPR006073">
    <property type="entry name" value="GTP-bd"/>
</dbReference>
<dbReference type="InterPro" id="IPR014100">
    <property type="entry name" value="GTP-bd_Obg/CgtA"/>
</dbReference>
<dbReference type="InterPro" id="IPR006074">
    <property type="entry name" value="GTP1-OBG_CS"/>
</dbReference>
<dbReference type="InterPro" id="IPR006169">
    <property type="entry name" value="GTP1_OBG_dom"/>
</dbReference>
<dbReference type="InterPro" id="IPR036726">
    <property type="entry name" value="GTP1_OBG_dom_sf"/>
</dbReference>
<dbReference type="InterPro" id="IPR045086">
    <property type="entry name" value="OBG_GTPase"/>
</dbReference>
<dbReference type="InterPro" id="IPR027417">
    <property type="entry name" value="P-loop_NTPase"/>
</dbReference>
<dbReference type="NCBIfam" id="TIGR02729">
    <property type="entry name" value="Obg_CgtA"/>
    <property type="match status" value="1"/>
</dbReference>
<dbReference type="NCBIfam" id="NF008955">
    <property type="entry name" value="PRK12297.1"/>
    <property type="match status" value="1"/>
</dbReference>
<dbReference type="NCBIfam" id="NF008956">
    <property type="entry name" value="PRK12299.1"/>
    <property type="match status" value="1"/>
</dbReference>
<dbReference type="PANTHER" id="PTHR11702">
    <property type="entry name" value="DEVELOPMENTALLY REGULATED GTP-BINDING PROTEIN-RELATED"/>
    <property type="match status" value="1"/>
</dbReference>
<dbReference type="PANTHER" id="PTHR11702:SF31">
    <property type="entry name" value="MITOCHONDRIAL RIBOSOME-ASSOCIATED GTPASE 2"/>
    <property type="match status" value="1"/>
</dbReference>
<dbReference type="Pfam" id="PF01018">
    <property type="entry name" value="GTP1_OBG"/>
    <property type="match status" value="1"/>
</dbReference>
<dbReference type="Pfam" id="PF01926">
    <property type="entry name" value="MMR_HSR1"/>
    <property type="match status" value="1"/>
</dbReference>
<dbReference type="PIRSF" id="PIRSF002401">
    <property type="entry name" value="GTP_bd_Obg/CgtA"/>
    <property type="match status" value="1"/>
</dbReference>
<dbReference type="PRINTS" id="PR00326">
    <property type="entry name" value="GTP1OBG"/>
</dbReference>
<dbReference type="SUPFAM" id="SSF82051">
    <property type="entry name" value="Obg GTP-binding protein N-terminal domain"/>
    <property type="match status" value="1"/>
</dbReference>
<dbReference type="SUPFAM" id="SSF52540">
    <property type="entry name" value="P-loop containing nucleoside triphosphate hydrolases"/>
    <property type="match status" value="1"/>
</dbReference>
<dbReference type="PROSITE" id="PS51710">
    <property type="entry name" value="G_OBG"/>
    <property type="match status" value="1"/>
</dbReference>
<dbReference type="PROSITE" id="PS00905">
    <property type="entry name" value="GTP1_OBG"/>
    <property type="match status" value="1"/>
</dbReference>
<dbReference type="PROSITE" id="PS51883">
    <property type="entry name" value="OBG"/>
    <property type="match status" value="1"/>
</dbReference>
<evidence type="ECO:0000255" key="1">
    <source>
        <dbReference type="HAMAP-Rule" id="MF_01454"/>
    </source>
</evidence>
<evidence type="ECO:0000255" key="2">
    <source>
        <dbReference type="PROSITE-ProRule" id="PRU01231"/>
    </source>
</evidence>
<keyword id="KW-0963">Cytoplasm</keyword>
<keyword id="KW-0342">GTP-binding</keyword>
<keyword id="KW-0378">Hydrolase</keyword>
<keyword id="KW-0460">Magnesium</keyword>
<keyword id="KW-0479">Metal-binding</keyword>
<keyword id="KW-0547">Nucleotide-binding</keyword>
<comment type="function">
    <text evidence="1">An essential GTPase which binds GTP, GDP and possibly (p)ppGpp with moderate affinity, with high nucleotide exchange rates and a fairly low GTP hydrolysis rate. Plays a role in control of the cell cycle, stress response, ribosome biogenesis and in those bacteria that undergo differentiation, in morphogenesis control.</text>
</comment>
<comment type="cofactor">
    <cofactor evidence="1">
        <name>Mg(2+)</name>
        <dbReference type="ChEBI" id="CHEBI:18420"/>
    </cofactor>
</comment>
<comment type="subunit">
    <text evidence="1">Monomer.</text>
</comment>
<comment type="subcellular location">
    <subcellularLocation>
        <location evidence="1">Cytoplasm</location>
    </subcellularLocation>
</comment>
<comment type="similarity">
    <text evidence="1">Belongs to the TRAFAC class OBG-HflX-like GTPase superfamily. OBG GTPase family.</text>
</comment>
<proteinExistence type="inferred from homology"/>
<protein>
    <recommendedName>
        <fullName evidence="1">GTPase Obg</fullName>
        <ecNumber evidence="1">3.6.5.-</ecNumber>
    </recommendedName>
    <alternativeName>
        <fullName evidence="1">GTP-binding protein Obg</fullName>
    </alternativeName>
</protein>
<sequence length="389" mass="42921">MKFVDEAVIRVEAGDGGSGCVSFRREKYVPDGGPDGGDGGDGGSVFLQADENFNTLIEFRFERFHMAERGENGRGRDCTGHSGKDLILKVPVGTRAVDHDTEEVLGDLTTHGQKLLVAKGGFHGLGNTRFKSSTNRAPRQKTLGTPGEVRSLKLELLLLADVGLLGMPNAGKSTFIRAVSRATPKVADYPFTTLVPNLGVVNPRPGQSFVIADIPGLIEGAADGAGLGIRFLKHLERCRILLHIIDIEPIDGTDPVESARAIVGELEKYSPKLASKPRWLVFNKTDLLLEEELQQKVDRIVKEMGWEGDVYTISAYNRDGTNELALKLLDYIASLPPEDNEIDPDSEVEFKWDNYHQANLDSVNEDYVDEDDDDDFDDDDYDVEVIYQR</sequence>